<protein>
    <recommendedName>
        <fullName evidence="1">Undecaprenyl-diphosphatase</fullName>
        <ecNumber evidence="1">3.6.1.27</ecNumber>
    </recommendedName>
    <alternativeName>
        <fullName evidence="1">Bacitracin resistance protein</fullName>
    </alternativeName>
    <alternativeName>
        <fullName evidence="1">Undecaprenyl pyrophosphate phosphatase</fullName>
    </alternativeName>
</protein>
<proteinExistence type="inferred from homology"/>
<gene>
    <name evidence="1" type="primary">uppP</name>
    <name type="ordered locus">Ssed_1080</name>
</gene>
<dbReference type="EC" id="3.6.1.27" evidence="1"/>
<dbReference type="EMBL" id="CP000821">
    <property type="protein sequence ID" value="ABV35691.1"/>
    <property type="molecule type" value="Genomic_DNA"/>
</dbReference>
<dbReference type="RefSeq" id="WP_012141427.1">
    <property type="nucleotide sequence ID" value="NC_009831.1"/>
</dbReference>
<dbReference type="SMR" id="A8FS68"/>
<dbReference type="STRING" id="425104.Ssed_1080"/>
<dbReference type="KEGG" id="sse:Ssed_1080"/>
<dbReference type="eggNOG" id="COG1968">
    <property type="taxonomic scope" value="Bacteria"/>
</dbReference>
<dbReference type="HOGENOM" id="CLU_060296_1_0_6"/>
<dbReference type="OrthoDB" id="9808289at2"/>
<dbReference type="Proteomes" id="UP000002015">
    <property type="component" value="Chromosome"/>
</dbReference>
<dbReference type="GO" id="GO:0005886">
    <property type="term" value="C:plasma membrane"/>
    <property type="evidence" value="ECO:0007669"/>
    <property type="project" value="UniProtKB-SubCell"/>
</dbReference>
<dbReference type="GO" id="GO:0050380">
    <property type="term" value="F:undecaprenyl-diphosphatase activity"/>
    <property type="evidence" value="ECO:0007669"/>
    <property type="project" value="UniProtKB-UniRule"/>
</dbReference>
<dbReference type="GO" id="GO:0071555">
    <property type="term" value="P:cell wall organization"/>
    <property type="evidence" value="ECO:0007669"/>
    <property type="project" value="UniProtKB-KW"/>
</dbReference>
<dbReference type="GO" id="GO:0009252">
    <property type="term" value="P:peptidoglycan biosynthetic process"/>
    <property type="evidence" value="ECO:0007669"/>
    <property type="project" value="UniProtKB-KW"/>
</dbReference>
<dbReference type="GO" id="GO:0008360">
    <property type="term" value="P:regulation of cell shape"/>
    <property type="evidence" value="ECO:0007669"/>
    <property type="project" value="UniProtKB-KW"/>
</dbReference>
<dbReference type="GO" id="GO:0046677">
    <property type="term" value="P:response to antibiotic"/>
    <property type="evidence" value="ECO:0007669"/>
    <property type="project" value="UniProtKB-UniRule"/>
</dbReference>
<dbReference type="HAMAP" id="MF_01006">
    <property type="entry name" value="Undec_diphosphatase"/>
    <property type="match status" value="1"/>
</dbReference>
<dbReference type="InterPro" id="IPR003824">
    <property type="entry name" value="UppP"/>
</dbReference>
<dbReference type="NCBIfam" id="NF001393">
    <property type="entry name" value="PRK00281.2-4"/>
    <property type="match status" value="1"/>
</dbReference>
<dbReference type="NCBIfam" id="TIGR00753">
    <property type="entry name" value="undec_PP_bacA"/>
    <property type="match status" value="1"/>
</dbReference>
<dbReference type="PANTHER" id="PTHR30622">
    <property type="entry name" value="UNDECAPRENYL-DIPHOSPHATASE"/>
    <property type="match status" value="1"/>
</dbReference>
<dbReference type="PANTHER" id="PTHR30622:SF4">
    <property type="entry name" value="UNDECAPRENYL-DIPHOSPHATASE"/>
    <property type="match status" value="1"/>
</dbReference>
<dbReference type="Pfam" id="PF02673">
    <property type="entry name" value="BacA"/>
    <property type="match status" value="1"/>
</dbReference>
<reference key="1">
    <citation type="submission" date="2007-08" db="EMBL/GenBank/DDBJ databases">
        <title>Complete sequence of Shewanella sediminis HAW-EB3.</title>
        <authorList>
            <consortium name="US DOE Joint Genome Institute"/>
            <person name="Copeland A."/>
            <person name="Lucas S."/>
            <person name="Lapidus A."/>
            <person name="Barry K."/>
            <person name="Glavina del Rio T."/>
            <person name="Dalin E."/>
            <person name="Tice H."/>
            <person name="Pitluck S."/>
            <person name="Chertkov O."/>
            <person name="Brettin T."/>
            <person name="Bruce D."/>
            <person name="Detter J.C."/>
            <person name="Han C."/>
            <person name="Schmutz J."/>
            <person name="Larimer F."/>
            <person name="Land M."/>
            <person name="Hauser L."/>
            <person name="Kyrpides N."/>
            <person name="Kim E."/>
            <person name="Zhao J.-S."/>
            <person name="Richardson P."/>
        </authorList>
    </citation>
    <scope>NUCLEOTIDE SEQUENCE [LARGE SCALE GENOMIC DNA]</scope>
    <source>
        <strain>HAW-EB3</strain>
    </source>
</reference>
<keyword id="KW-0046">Antibiotic resistance</keyword>
<keyword id="KW-0997">Cell inner membrane</keyword>
<keyword id="KW-1003">Cell membrane</keyword>
<keyword id="KW-0133">Cell shape</keyword>
<keyword id="KW-0961">Cell wall biogenesis/degradation</keyword>
<keyword id="KW-0378">Hydrolase</keyword>
<keyword id="KW-0472">Membrane</keyword>
<keyword id="KW-0573">Peptidoglycan synthesis</keyword>
<keyword id="KW-1185">Reference proteome</keyword>
<keyword id="KW-0812">Transmembrane</keyword>
<keyword id="KW-1133">Transmembrane helix</keyword>
<evidence type="ECO:0000255" key="1">
    <source>
        <dbReference type="HAMAP-Rule" id="MF_01006"/>
    </source>
</evidence>
<comment type="function">
    <text evidence="1">Catalyzes the dephosphorylation of undecaprenyl diphosphate (UPP). Confers resistance to bacitracin.</text>
</comment>
<comment type="catalytic activity">
    <reaction evidence="1">
        <text>di-trans,octa-cis-undecaprenyl diphosphate + H2O = di-trans,octa-cis-undecaprenyl phosphate + phosphate + H(+)</text>
        <dbReference type="Rhea" id="RHEA:28094"/>
        <dbReference type="ChEBI" id="CHEBI:15377"/>
        <dbReference type="ChEBI" id="CHEBI:15378"/>
        <dbReference type="ChEBI" id="CHEBI:43474"/>
        <dbReference type="ChEBI" id="CHEBI:58405"/>
        <dbReference type="ChEBI" id="CHEBI:60392"/>
        <dbReference type="EC" id="3.6.1.27"/>
    </reaction>
</comment>
<comment type="subcellular location">
    <subcellularLocation>
        <location evidence="1">Cell inner membrane</location>
        <topology evidence="1">Multi-pass membrane protein</topology>
    </subcellularLocation>
</comment>
<comment type="miscellaneous">
    <text>Bacitracin is thought to be involved in the inhibition of peptidoglycan synthesis by sequestering undecaprenyl diphosphate, thereby reducing the pool of lipid carrier available.</text>
</comment>
<comment type="similarity">
    <text evidence="1">Belongs to the UppP family.</text>
</comment>
<accession>A8FS68</accession>
<organism>
    <name type="scientific">Shewanella sediminis (strain HAW-EB3)</name>
    <dbReference type="NCBI Taxonomy" id="425104"/>
    <lineage>
        <taxon>Bacteria</taxon>
        <taxon>Pseudomonadati</taxon>
        <taxon>Pseudomonadota</taxon>
        <taxon>Gammaproteobacteria</taxon>
        <taxon>Alteromonadales</taxon>
        <taxon>Shewanellaceae</taxon>
        <taxon>Shewanella</taxon>
    </lineage>
</organism>
<sequence>MDTFQVIILALIQGLTEFLPISSSAHLILPSQLLGWEDQGLSFDVAVNTGSLLAVVMYFRHELWSMFKAWTDSIITRKQTDESKLSWWIILATIPAVIVGFTAKDFIETYLRNTAVIATTTIVFGLLLWWADRMFRPGFTEFQVGWKKALVIGVAQAMALIPGTSRSGATITAALMLGLSREAAARFSFLMSVPVSLGAAILVTKDLISSGQTIDYQALSLGIIVSFVAAYTCIHLFLKLISRMGMTPFVIYRLALGAILCAFMFA</sequence>
<name>UPPP_SHESH</name>
<feature type="chain" id="PRO_1000083990" description="Undecaprenyl-diphosphatase">
    <location>
        <begin position="1"/>
        <end position="266"/>
    </location>
</feature>
<feature type="transmembrane region" description="Helical" evidence="1">
    <location>
        <begin position="1"/>
        <end position="21"/>
    </location>
</feature>
<feature type="transmembrane region" description="Helical" evidence="1">
    <location>
        <begin position="39"/>
        <end position="59"/>
    </location>
</feature>
<feature type="transmembrane region" description="Helical" evidence="1">
    <location>
        <begin position="87"/>
        <end position="107"/>
    </location>
</feature>
<feature type="transmembrane region" description="Helical" evidence="1">
    <location>
        <begin position="115"/>
        <end position="135"/>
    </location>
</feature>
<feature type="transmembrane region" description="Helical" evidence="1">
    <location>
        <begin position="144"/>
        <end position="164"/>
    </location>
</feature>
<feature type="transmembrane region" description="Helical" evidence="1">
    <location>
        <begin position="183"/>
        <end position="203"/>
    </location>
</feature>
<feature type="transmembrane region" description="Helical" evidence="1">
    <location>
        <begin position="218"/>
        <end position="238"/>
    </location>
</feature>
<feature type="transmembrane region" description="Helical" evidence="1">
    <location>
        <begin position="246"/>
        <end position="266"/>
    </location>
</feature>